<evidence type="ECO:0000255" key="1">
    <source>
        <dbReference type="HAMAP-Rule" id="MF_01017"/>
    </source>
</evidence>
<sequence>MAKVLVLYYSMYGHIETMARAVAEGASKVDGAEVVVKRVPETMPPQLFEKAGGKTQTAPVATPQELADYDAIIFGTPTRFGNMSGQMRTFLDQTGGLWASGALYGKLASVFSSTGTGGGQEQTITSTWTTLAHHGMVIVPIGYAAQELFDVSQVRGGTPYGATTIAGGDGSRQPSQEELSIARYQGEYVAGLAVKLNG</sequence>
<dbReference type="EC" id="1.6.5.2" evidence="1"/>
<dbReference type="EMBL" id="CU928145">
    <property type="protein sequence ID" value="CAU96975.1"/>
    <property type="molecule type" value="Genomic_DNA"/>
</dbReference>
<dbReference type="SMR" id="B7LFB3"/>
<dbReference type="KEGG" id="eck:EC55989_1114"/>
<dbReference type="HOGENOM" id="CLU_051402_0_2_6"/>
<dbReference type="Proteomes" id="UP000000746">
    <property type="component" value="Chromosome"/>
</dbReference>
<dbReference type="GO" id="GO:0016020">
    <property type="term" value="C:membrane"/>
    <property type="evidence" value="ECO:0007669"/>
    <property type="project" value="TreeGrafter"/>
</dbReference>
<dbReference type="GO" id="GO:0050660">
    <property type="term" value="F:flavin adenine dinucleotide binding"/>
    <property type="evidence" value="ECO:0007669"/>
    <property type="project" value="UniProtKB-UniRule"/>
</dbReference>
<dbReference type="GO" id="GO:0010181">
    <property type="term" value="F:FMN binding"/>
    <property type="evidence" value="ECO:0007669"/>
    <property type="project" value="InterPro"/>
</dbReference>
<dbReference type="GO" id="GO:0051287">
    <property type="term" value="F:NAD binding"/>
    <property type="evidence" value="ECO:0007669"/>
    <property type="project" value="UniProtKB-UniRule"/>
</dbReference>
<dbReference type="GO" id="GO:0050136">
    <property type="term" value="F:NADH:ubiquinone reductase (non-electrogenic) activity"/>
    <property type="evidence" value="ECO:0007669"/>
    <property type="project" value="RHEA"/>
</dbReference>
<dbReference type="GO" id="GO:0050661">
    <property type="term" value="F:NADP binding"/>
    <property type="evidence" value="ECO:0007669"/>
    <property type="project" value="UniProtKB-UniRule"/>
</dbReference>
<dbReference type="GO" id="GO:0008753">
    <property type="term" value="F:NADPH dehydrogenase (quinone) activity"/>
    <property type="evidence" value="ECO:0007669"/>
    <property type="project" value="RHEA"/>
</dbReference>
<dbReference type="FunFam" id="3.40.50.360:FF:000004">
    <property type="entry name" value="NAD(P)H dehydrogenase (quinone)"/>
    <property type="match status" value="1"/>
</dbReference>
<dbReference type="Gene3D" id="3.40.50.360">
    <property type="match status" value="1"/>
</dbReference>
<dbReference type="HAMAP" id="MF_01017">
    <property type="entry name" value="NQOR"/>
    <property type="match status" value="1"/>
</dbReference>
<dbReference type="InterPro" id="IPR008254">
    <property type="entry name" value="Flavodoxin/NO_synth"/>
</dbReference>
<dbReference type="InterPro" id="IPR029039">
    <property type="entry name" value="Flavoprotein-like_sf"/>
</dbReference>
<dbReference type="InterPro" id="IPR010089">
    <property type="entry name" value="Flavoprotein_WrbA-like"/>
</dbReference>
<dbReference type="InterPro" id="IPR005025">
    <property type="entry name" value="FMN_Rdtase-like_dom"/>
</dbReference>
<dbReference type="InterPro" id="IPR037513">
    <property type="entry name" value="NQO"/>
</dbReference>
<dbReference type="NCBIfam" id="TIGR01755">
    <property type="entry name" value="flav_wrbA"/>
    <property type="match status" value="1"/>
</dbReference>
<dbReference type="NCBIfam" id="NF002999">
    <property type="entry name" value="PRK03767.1"/>
    <property type="match status" value="1"/>
</dbReference>
<dbReference type="PANTHER" id="PTHR30546">
    <property type="entry name" value="FLAVODOXIN-RELATED PROTEIN WRBA-RELATED"/>
    <property type="match status" value="1"/>
</dbReference>
<dbReference type="PANTHER" id="PTHR30546:SF23">
    <property type="entry name" value="FLAVOPROTEIN-LIKE PROTEIN YCP4-RELATED"/>
    <property type="match status" value="1"/>
</dbReference>
<dbReference type="Pfam" id="PF03358">
    <property type="entry name" value="FMN_red"/>
    <property type="match status" value="1"/>
</dbReference>
<dbReference type="SUPFAM" id="SSF52218">
    <property type="entry name" value="Flavoproteins"/>
    <property type="match status" value="1"/>
</dbReference>
<dbReference type="PROSITE" id="PS50902">
    <property type="entry name" value="FLAVODOXIN_LIKE"/>
    <property type="match status" value="1"/>
</dbReference>
<protein>
    <recommendedName>
        <fullName evidence="1">NAD(P)H dehydrogenase (quinone)</fullName>
        <ecNumber evidence="1">1.6.5.2</ecNumber>
    </recommendedName>
    <alternativeName>
        <fullName>Flavoprotein WrbA</fullName>
    </alternativeName>
    <alternativeName>
        <fullName evidence="1">NAD(P)H:quinone oxidoreductase</fullName>
        <shortName evidence="1">NQO</shortName>
    </alternativeName>
</protein>
<name>NQOR_ECO55</name>
<reference key="1">
    <citation type="journal article" date="2009" name="PLoS Genet.">
        <title>Organised genome dynamics in the Escherichia coli species results in highly diverse adaptive paths.</title>
        <authorList>
            <person name="Touchon M."/>
            <person name="Hoede C."/>
            <person name="Tenaillon O."/>
            <person name="Barbe V."/>
            <person name="Baeriswyl S."/>
            <person name="Bidet P."/>
            <person name="Bingen E."/>
            <person name="Bonacorsi S."/>
            <person name="Bouchier C."/>
            <person name="Bouvet O."/>
            <person name="Calteau A."/>
            <person name="Chiapello H."/>
            <person name="Clermont O."/>
            <person name="Cruveiller S."/>
            <person name="Danchin A."/>
            <person name="Diard M."/>
            <person name="Dossat C."/>
            <person name="Karoui M.E."/>
            <person name="Frapy E."/>
            <person name="Garry L."/>
            <person name="Ghigo J.M."/>
            <person name="Gilles A.M."/>
            <person name="Johnson J."/>
            <person name="Le Bouguenec C."/>
            <person name="Lescat M."/>
            <person name="Mangenot S."/>
            <person name="Martinez-Jehanne V."/>
            <person name="Matic I."/>
            <person name="Nassif X."/>
            <person name="Oztas S."/>
            <person name="Petit M.A."/>
            <person name="Pichon C."/>
            <person name="Rouy Z."/>
            <person name="Ruf C.S."/>
            <person name="Schneider D."/>
            <person name="Tourret J."/>
            <person name="Vacherie B."/>
            <person name="Vallenet D."/>
            <person name="Medigue C."/>
            <person name="Rocha E.P.C."/>
            <person name="Denamur E."/>
        </authorList>
    </citation>
    <scope>NUCLEOTIDE SEQUENCE [LARGE SCALE GENOMIC DNA]</scope>
    <source>
        <strain>55989 / EAEC</strain>
    </source>
</reference>
<feature type="chain" id="PRO_1000149009" description="NAD(P)H dehydrogenase (quinone)">
    <location>
        <begin position="1"/>
        <end position="198"/>
    </location>
</feature>
<feature type="domain" description="Flavodoxin-like" evidence="1">
    <location>
        <begin position="4"/>
        <end position="189"/>
    </location>
</feature>
<feature type="binding site" evidence="1">
    <location>
        <begin position="10"/>
        <end position="15"/>
    </location>
    <ligand>
        <name>FMN</name>
        <dbReference type="ChEBI" id="CHEBI:58210"/>
    </ligand>
</feature>
<feature type="binding site" evidence="1">
    <location>
        <position position="12"/>
    </location>
    <ligand>
        <name>NAD(+)</name>
        <dbReference type="ChEBI" id="CHEBI:57540"/>
    </ligand>
</feature>
<feature type="binding site" evidence="1">
    <location>
        <begin position="78"/>
        <end position="80"/>
    </location>
    <ligand>
        <name>FMN</name>
        <dbReference type="ChEBI" id="CHEBI:58210"/>
    </ligand>
</feature>
<feature type="binding site" evidence="1">
    <location>
        <position position="98"/>
    </location>
    <ligand>
        <name>substrate</name>
    </ligand>
</feature>
<feature type="binding site" evidence="1">
    <location>
        <begin position="113"/>
        <end position="118"/>
    </location>
    <ligand>
        <name>FMN</name>
        <dbReference type="ChEBI" id="CHEBI:58210"/>
    </ligand>
</feature>
<feature type="binding site" evidence="1">
    <location>
        <position position="133"/>
    </location>
    <ligand>
        <name>FMN</name>
        <dbReference type="ChEBI" id="CHEBI:58210"/>
    </ligand>
</feature>
<proteinExistence type="inferred from homology"/>
<comment type="catalytic activity">
    <reaction evidence="1">
        <text>a quinone + NADH + H(+) = a quinol + NAD(+)</text>
        <dbReference type="Rhea" id="RHEA:46160"/>
        <dbReference type="ChEBI" id="CHEBI:15378"/>
        <dbReference type="ChEBI" id="CHEBI:24646"/>
        <dbReference type="ChEBI" id="CHEBI:57540"/>
        <dbReference type="ChEBI" id="CHEBI:57945"/>
        <dbReference type="ChEBI" id="CHEBI:132124"/>
        <dbReference type="EC" id="1.6.5.2"/>
    </reaction>
</comment>
<comment type="catalytic activity">
    <reaction evidence="1">
        <text>a quinone + NADPH + H(+) = a quinol + NADP(+)</text>
        <dbReference type="Rhea" id="RHEA:46164"/>
        <dbReference type="ChEBI" id="CHEBI:15378"/>
        <dbReference type="ChEBI" id="CHEBI:24646"/>
        <dbReference type="ChEBI" id="CHEBI:57783"/>
        <dbReference type="ChEBI" id="CHEBI:58349"/>
        <dbReference type="ChEBI" id="CHEBI:132124"/>
        <dbReference type="EC" id="1.6.5.2"/>
    </reaction>
</comment>
<comment type="cofactor">
    <cofactor evidence="1">
        <name>FMN</name>
        <dbReference type="ChEBI" id="CHEBI:58210"/>
    </cofactor>
    <text evidence="1">Binds 1 FMN per monomer.</text>
</comment>
<comment type="similarity">
    <text evidence="1">Belongs to the WrbA family.</text>
</comment>
<keyword id="KW-0285">Flavoprotein</keyword>
<keyword id="KW-0288">FMN</keyword>
<keyword id="KW-0520">NAD</keyword>
<keyword id="KW-0521">NADP</keyword>
<keyword id="KW-0547">Nucleotide-binding</keyword>
<keyword id="KW-0560">Oxidoreductase</keyword>
<keyword id="KW-1185">Reference proteome</keyword>
<organism>
    <name type="scientific">Escherichia coli (strain 55989 / EAEC)</name>
    <dbReference type="NCBI Taxonomy" id="585055"/>
    <lineage>
        <taxon>Bacteria</taxon>
        <taxon>Pseudomonadati</taxon>
        <taxon>Pseudomonadota</taxon>
        <taxon>Gammaproteobacteria</taxon>
        <taxon>Enterobacterales</taxon>
        <taxon>Enterobacteriaceae</taxon>
        <taxon>Escherichia</taxon>
    </lineage>
</organism>
<gene>
    <name type="ordered locus">EC55989_1114</name>
</gene>
<accession>B7LFB3</accession>